<keyword id="KW-1185">Reference proteome</keyword>
<reference key="1">
    <citation type="journal article" date="2005" name="Nature">
        <title>The genome of the social amoeba Dictyostelium discoideum.</title>
        <authorList>
            <person name="Eichinger L."/>
            <person name="Pachebat J.A."/>
            <person name="Gloeckner G."/>
            <person name="Rajandream M.A."/>
            <person name="Sucgang R."/>
            <person name="Berriman M."/>
            <person name="Song J."/>
            <person name="Olsen R."/>
            <person name="Szafranski K."/>
            <person name="Xu Q."/>
            <person name="Tunggal B."/>
            <person name="Kummerfeld S."/>
            <person name="Madera M."/>
            <person name="Konfortov B.A."/>
            <person name="Rivero F."/>
            <person name="Bankier A.T."/>
            <person name="Lehmann R."/>
            <person name="Hamlin N."/>
            <person name="Davies R."/>
            <person name="Gaudet P."/>
            <person name="Fey P."/>
            <person name="Pilcher K."/>
            <person name="Chen G."/>
            <person name="Saunders D."/>
            <person name="Sodergren E.J."/>
            <person name="Davis P."/>
            <person name="Kerhornou A."/>
            <person name="Nie X."/>
            <person name="Hall N."/>
            <person name="Anjard C."/>
            <person name="Hemphill L."/>
            <person name="Bason N."/>
            <person name="Farbrother P."/>
            <person name="Desany B."/>
            <person name="Just E."/>
            <person name="Morio T."/>
            <person name="Rost R."/>
            <person name="Churcher C.M."/>
            <person name="Cooper J."/>
            <person name="Haydock S."/>
            <person name="van Driessche N."/>
            <person name="Cronin A."/>
            <person name="Goodhead I."/>
            <person name="Muzny D.M."/>
            <person name="Mourier T."/>
            <person name="Pain A."/>
            <person name="Lu M."/>
            <person name="Harper D."/>
            <person name="Lindsay R."/>
            <person name="Hauser H."/>
            <person name="James K.D."/>
            <person name="Quiles M."/>
            <person name="Madan Babu M."/>
            <person name="Saito T."/>
            <person name="Buchrieser C."/>
            <person name="Wardroper A."/>
            <person name="Felder M."/>
            <person name="Thangavelu M."/>
            <person name="Johnson D."/>
            <person name="Knights A."/>
            <person name="Loulseged H."/>
            <person name="Mungall K.L."/>
            <person name="Oliver K."/>
            <person name="Price C."/>
            <person name="Quail M.A."/>
            <person name="Urushihara H."/>
            <person name="Hernandez J."/>
            <person name="Rabbinowitsch E."/>
            <person name="Steffen D."/>
            <person name="Sanders M."/>
            <person name="Ma J."/>
            <person name="Kohara Y."/>
            <person name="Sharp S."/>
            <person name="Simmonds M.N."/>
            <person name="Spiegler S."/>
            <person name="Tivey A."/>
            <person name="Sugano S."/>
            <person name="White B."/>
            <person name="Walker D."/>
            <person name="Woodward J.R."/>
            <person name="Winckler T."/>
            <person name="Tanaka Y."/>
            <person name="Shaulsky G."/>
            <person name="Schleicher M."/>
            <person name="Weinstock G.M."/>
            <person name="Rosenthal A."/>
            <person name="Cox E.C."/>
            <person name="Chisholm R.L."/>
            <person name="Gibbs R.A."/>
            <person name="Loomis W.F."/>
            <person name="Platzer M."/>
            <person name="Kay R.R."/>
            <person name="Williams J.G."/>
            <person name="Dear P.H."/>
            <person name="Noegel A.A."/>
            <person name="Barrell B.G."/>
            <person name="Kuspa A."/>
        </authorList>
    </citation>
    <scope>NUCLEOTIDE SEQUENCE [LARGE SCALE GENOMIC DNA]</scope>
    <source>
        <strain>AX4</strain>
    </source>
</reference>
<comment type="similarity">
    <text evidence="1">Belongs to the UPF0512 family.</text>
</comment>
<dbReference type="EMBL" id="AAFI02000172">
    <property type="protein sequence ID" value="EAL61967.1"/>
    <property type="molecule type" value="Genomic_DNA"/>
</dbReference>
<dbReference type="RefSeq" id="XP_635471.1">
    <property type="nucleotide sequence ID" value="XM_630379.1"/>
</dbReference>
<dbReference type="FunCoup" id="Q54FF1">
    <property type="interactions" value="640"/>
</dbReference>
<dbReference type="PaxDb" id="44689-DDB0266561"/>
<dbReference type="EnsemblProtists" id="EAL61967">
    <property type="protein sequence ID" value="EAL61967"/>
    <property type="gene ID" value="DDB_G0290903"/>
</dbReference>
<dbReference type="GeneID" id="8627887"/>
<dbReference type="KEGG" id="ddi:DDB_G0290903"/>
<dbReference type="dictyBase" id="DDB_G0290903"/>
<dbReference type="VEuPathDB" id="AmoebaDB:DDB_G0290903"/>
<dbReference type="HOGENOM" id="CLU_194865_0_0_1"/>
<dbReference type="InParanoid" id="Q54FF1"/>
<dbReference type="OMA" id="DNSTACF"/>
<dbReference type="PhylomeDB" id="Q54FF1"/>
<dbReference type="PRO" id="PR:Q54FF1"/>
<dbReference type="Proteomes" id="UP000002195">
    <property type="component" value="Chromosome 5"/>
</dbReference>
<dbReference type="InterPro" id="IPR008455">
    <property type="entry name" value="HssA/B-related"/>
</dbReference>
<dbReference type="Pfam" id="PF05710">
    <property type="entry name" value="Coiled"/>
    <property type="match status" value="1"/>
</dbReference>
<organism>
    <name type="scientific">Dictyostelium discoideum</name>
    <name type="common">Social amoeba</name>
    <dbReference type="NCBI Taxonomy" id="44689"/>
    <lineage>
        <taxon>Eukaryota</taxon>
        <taxon>Amoebozoa</taxon>
        <taxon>Evosea</taxon>
        <taxon>Eumycetozoa</taxon>
        <taxon>Dictyostelia</taxon>
        <taxon>Dictyosteliales</taxon>
        <taxon>Dictyosteliaceae</taxon>
        <taxon>Dictyostelium</taxon>
    </lineage>
</organism>
<gene>
    <name type="ORF">DDB_G0290903</name>
</gene>
<proteinExistence type="inferred from homology"/>
<protein>
    <recommendedName>
        <fullName>UPF0512 protein C</fullName>
    </recommendedName>
</protein>
<feature type="chain" id="PRO_0000317341" description="UPF0512 protein C">
    <location>
        <begin position="1"/>
        <end position="75"/>
    </location>
</feature>
<name>U512C_DICDI</name>
<sequence length="75" mass="8049">MTIFNSISSISNPTRSTSSSIATLNYTGSVFNDNSTACFDNDLGRWGGCGGCGGSNVNIINLDIDIGRRRHRRCC</sequence>
<accession>Q54FF1</accession>
<evidence type="ECO:0000305" key="1"/>